<sequence length="304" mass="34219">MPLFDLISPKAFVKLVASEKVHRIVPVDATWYLPSWKLDNKVDFLTKPRIPNSIFFDIDAISDKKSPYPHMFPTKKVFDDAMSNLGVQKDDILVVYDRVGNFSSPRCAWTLGVMGHPKVYLLNNFNQYREFKYPLDSSKVAAFSPYPKSHYESSESFQDKEIVDYEEMFQLVKSGELAKKFNAFDARSLGRFEGTEPEPRSDIPSGHIPGTQPLPYGSLLDPETKTYPEAGEAIHATLEKALKDFHCTLDPSKPTICSCGTGVSGVIIKTALELAGVPNVRLYDGSWTEWVLKSGPEWIAENRD</sequence>
<keyword id="KW-0002">3D-structure</keyword>
<keyword id="KW-0963">Cytoplasm</keyword>
<keyword id="KW-0496">Mitochondrion</keyword>
<keyword id="KW-0597">Phosphoprotein</keyword>
<keyword id="KW-1185">Reference proteome</keyword>
<keyword id="KW-0677">Repeat</keyword>
<keyword id="KW-0808">Transferase</keyword>
<accession>Q08686</accession>
<accession>D6W2V2</accession>
<name>THTR_YEAST</name>
<comment type="function">
    <text evidence="6 7 9">Sulfur transferase that accepts persulfite from NFS1 and transfers it to UBA4 in the pathway for 2-thiolation of the wobble uridine base of tRNAs (PubMed:18755837, PubMed:19151091). Stimulates sulfur transfer by NFS1 (PubMed:19151091). Involved in metabolism of sterol esters in a tRNA thiolation pathway-independent manner (PubMed:28830344).</text>
</comment>
<comment type="catalytic activity">
    <reaction evidence="7">
        <text>thiosulfate + hydrogen cyanide = thiocyanate + sulfite + 2 H(+)</text>
        <dbReference type="Rhea" id="RHEA:16881"/>
        <dbReference type="ChEBI" id="CHEBI:15378"/>
        <dbReference type="ChEBI" id="CHEBI:17359"/>
        <dbReference type="ChEBI" id="CHEBI:18022"/>
        <dbReference type="ChEBI" id="CHEBI:18407"/>
        <dbReference type="ChEBI" id="CHEBI:33542"/>
        <dbReference type="EC" id="2.8.1.1"/>
    </reaction>
</comment>
<comment type="subcellular location">
    <subcellularLocation>
        <location evidence="4">Mitochondrion</location>
    </subcellularLocation>
    <subcellularLocation>
        <location evidence="4">Cytoplasm</location>
    </subcellularLocation>
</comment>
<comment type="domain">
    <text evidence="1">Contains two rhodanese domains with different primary structures but with near identical secondary structure conformations suggesting a common evolutionary origin. Only the C-terminal rhodanese domain contains the catalytic cysteine residue (By similarity).</text>
</comment>
<comment type="disruption phenotype">
    <text evidence="7 9">Leads to a lack of 2-thiouridine for a large fraction of tRNA-Glu, but the small fraction remains 2-thiolated (PubMed:19151091). Increases the amount of sterol esters within the cells (PubMed:28830344).</text>
</comment>
<comment type="miscellaneous">
    <text evidence="5">Present with 5770 molecules/cell in log phase SD medium.</text>
</comment>
<organism>
    <name type="scientific">Saccharomyces cerevisiae (strain ATCC 204508 / S288c)</name>
    <name type="common">Baker's yeast</name>
    <dbReference type="NCBI Taxonomy" id="559292"/>
    <lineage>
        <taxon>Eukaryota</taxon>
        <taxon>Fungi</taxon>
        <taxon>Dikarya</taxon>
        <taxon>Ascomycota</taxon>
        <taxon>Saccharomycotina</taxon>
        <taxon>Saccharomycetes</taxon>
        <taxon>Saccharomycetales</taxon>
        <taxon>Saccharomycetaceae</taxon>
        <taxon>Saccharomyces</taxon>
    </lineage>
</organism>
<dbReference type="EC" id="2.8.1.1" evidence="7"/>
<dbReference type="EMBL" id="Z75159">
    <property type="protein sequence ID" value="CAA99473.1"/>
    <property type="molecule type" value="Genomic_DNA"/>
</dbReference>
<dbReference type="EMBL" id="AY692732">
    <property type="protein sequence ID" value="AAT92751.1"/>
    <property type="molecule type" value="Genomic_DNA"/>
</dbReference>
<dbReference type="EMBL" id="BK006948">
    <property type="protein sequence ID" value="DAA11018.1"/>
    <property type="molecule type" value="Genomic_DNA"/>
</dbReference>
<dbReference type="PIR" id="S67148">
    <property type="entry name" value="S67148"/>
</dbReference>
<dbReference type="RefSeq" id="NP_014894.3">
    <property type="nucleotide sequence ID" value="NM_001183670.3"/>
</dbReference>
<dbReference type="PDB" id="3UTN">
    <property type="method" value="X-ray"/>
    <property type="resolution" value="1.90 A"/>
    <property type="chains" value="X=1-304"/>
</dbReference>
<dbReference type="PDBsum" id="3UTN"/>
<dbReference type="SMR" id="Q08686"/>
<dbReference type="BioGRID" id="34641">
    <property type="interactions" value="121"/>
</dbReference>
<dbReference type="DIP" id="DIP-4457N"/>
<dbReference type="FunCoup" id="Q08686">
    <property type="interactions" value="547"/>
</dbReference>
<dbReference type="IntAct" id="Q08686">
    <property type="interactions" value="9"/>
</dbReference>
<dbReference type="STRING" id="4932.YOR251C"/>
<dbReference type="iPTMnet" id="Q08686"/>
<dbReference type="PaxDb" id="4932-YOR251C"/>
<dbReference type="PeptideAtlas" id="Q08686"/>
<dbReference type="EnsemblFungi" id="YOR251C_mRNA">
    <property type="protein sequence ID" value="YOR251C"/>
    <property type="gene ID" value="YOR251C"/>
</dbReference>
<dbReference type="GeneID" id="854425"/>
<dbReference type="KEGG" id="sce:YOR251C"/>
<dbReference type="AGR" id="SGD:S000005777"/>
<dbReference type="SGD" id="S000005777">
    <property type="gene designation" value="TUM1"/>
</dbReference>
<dbReference type="VEuPathDB" id="FungiDB:YOR251C"/>
<dbReference type="eggNOG" id="KOG1529">
    <property type="taxonomic scope" value="Eukaryota"/>
</dbReference>
<dbReference type="GeneTree" id="ENSGT00510000046773"/>
<dbReference type="HOGENOM" id="CLU_031618_3_0_1"/>
<dbReference type="InParanoid" id="Q08686"/>
<dbReference type="OMA" id="NNNWFAS"/>
<dbReference type="OrthoDB" id="270167at2759"/>
<dbReference type="BioCyc" id="MetaCyc:YOR251C-MONOMER"/>
<dbReference type="BioCyc" id="YEAST:YOR251C-MONOMER"/>
<dbReference type="Reactome" id="R-SCE-1614558">
    <property type="pathway name" value="Degradation of cysteine and homocysteine"/>
</dbReference>
<dbReference type="BioGRID-ORCS" id="854425">
    <property type="hits" value="2 hits in 10 CRISPR screens"/>
</dbReference>
<dbReference type="EvolutionaryTrace" id="Q08686"/>
<dbReference type="PRO" id="PR:Q08686"/>
<dbReference type="Proteomes" id="UP000002311">
    <property type="component" value="Chromosome XV"/>
</dbReference>
<dbReference type="RNAct" id="Q08686">
    <property type="molecule type" value="protein"/>
</dbReference>
<dbReference type="GO" id="GO:0005737">
    <property type="term" value="C:cytoplasm"/>
    <property type="evidence" value="ECO:0007005"/>
    <property type="project" value="SGD"/>
</dbReference>
<dbReference type="GO" id="GO:0005739">
    <property type="term" value="C:mitochondrion"/>
    <property type="evidence" value="ECO:0007005"/>
    <property type="project" value="SGD"/>
</dbReference>
<dbReference type="GO" id="GO:0016784">
    <property type="term" value="F:3-mercaptopyruvate sulfurtransferase activity"/>
    <property type="evidence" value="ECO:0000318"/>
    <property type="project" value="GO_Central"/>
</dbReference>
<dbReference type="GO" id="GO:0004792">
    <property type="term" value="F:thiosulfate-cyanide sulfurtransferase activity"/>
    <property type="evidence" value="ECO:0000314"/>
    <property type="project" value="SGD"/>
</dbReference>
<dbReference type="GO" id="GO:0002143">
    <property type="term" value="P:tRNA wobble position uridine thiolation"/>
    <property type="evidence" value="ECO:0000315"/>
    <property type="project" value="SGD"/>
</dbReference>
<dbReference type="GO" id="GO:0002098">
    <property type="term" value="P:tRNA wobble uridine modification"/>
    <property type="evidence" value="ECO:0000315"/>
    <property type="project" value="SGD"/>
</dbReference>
<dbReference type="CDD" id="cd01448">
    <property type="entry name" value="TST_Repeat_1"/>
    <property type="match status" value="1"/>
</dbReference>
<dbReference type="CDD" id="cd01449">
    <property type="entry name" value="TST_Repeat_2"/>
    <property type="match status" value="1"/>
</dbReference>
<dbReference type="FunFam" id="3.40.250.10:FF:000069">
    <property type="entry name" value="Sulfurtransferase"/>
    <property type="match status" value="1"/>
</dbReference>
<dbReference type="FunFam" id="3.40.250.10:FF:000070">
    <property type="entry name" value="Sulfurtransferase"/>
    <property type="match status" value="1"/>
</dbReference>
<dbReference type="Gene3D" id="3.40.250.10">
    <property type="entry name" value="Rhodanese-like domain"/>
    <property type="match status" value="2"/>
</dbReference>
<dbReference type="InterPro" id="IPR001763">
    <property type="entry name" value="Rhodanese-like_dom"/>
</dbReference>
<dbReference type="InterPro" id="IPR036873">
    <property type="entry name" value="Rhodanese-like_dom_sf"/>
</dbReference>
<dbReference type="InterPro" id="IPR001307">
    <property type="entry name" value="Thiosulphate_STrfase_CS"/>
</dbReference>
<dbReference type="InterPro" id="IPR045078">
    <property type="entry name" value="TST/MPST-like"/>
</dbReference>
<dbReference type="PANTHER" id="PTHR11364:SF27">
    <property type="entry name" value="SULFURTRANSFERASE"/>
    <property type="match status" value="1"/>
</dbReference>
<dbReference type="PANTHER" id="PTHR11364">
    <property type="entry name" value="THIOSULFATE SULFERTANSFERASE"/>
    <property type="match status" value="1"/>
</dbReference>
<dbReference type="Pfam" id="PF00581">
    <property type="entry name" value="Rhodanese"/>
    <property type="match status" value="1"/>
</dbReference>
<dbReference type="SMART" id="SM00450">
    <property type="entry name" value="RHOD"/>
    <property type="match status" value="2"/>
</dbReference>
<dbReference type="SUPFAM" id="SSF52821">
    <property type="entry name" value="Rhodanese/Cell cycle control phosphatase"/>
    <property type="match status" value="2"/>
</dbReference>
<dbReference type="PROSITE" id="PS00683">
    <property type="entry name" value="RHODANESE_2"/>
    <property type="match status" value="1"/>
</dbReference>
<dbReference type="PROSITE" id="PS50206">
    <property type="entry name" value="RHODANESE_3"/>
    <property type="match status" value="2"/>
</dbReference>
<feature type="chain" id="PRO_0000139402" description="Thiosulfate sulfurtransferase TUM1">
    <location>
        <begin position="1"/>
        <end position="304"/>
    </location>
</feature>
<feature type="domain" description="Rhodanese 1" evidence="2">
    <location>
        <begin position="20"/>
        <end position="137"/>
    </location>
</feature>
<feature type="domain" description="Rhodanese 2" evidence="2">
    <location>
        <begin position="177"/>
        <end position="299"/>
    </location>
</feature>
<feature type="region of interest" description="Disordered" evidence="3">
    <location>
        <begin position="191"/>
        <end position="222"/>
    </location>
</feature>
<feature type="compositionally biased region" description="Basic and acidic residues" evidence="3">
    <location>
        <begin position="191"/>
        <end position="201"/>
    </location>
</feature>
<feature type="active site" description="Cysteine persulfide intermediate" evidence="2 8">
    <location>
        <position position="259"/>
    </location>
</feature>
<feature type="modified residue" description="Phosphoserine" evidence="13">
    <location>
        <position position="201"/>
    </location>
</feature>
<feature type="modified residue" description="Phosphoserine" evidence="12">
    <location>
        <position position="264"/>
    </location>
</feature>
<feature type="strand" evidence="14">
    <location>
        <begin position="5"/>
        <end position="7"/>
    </location>
</feature>
<feature type="helix" evidence="14">
    <location>
        <begin position="9"/>
        <end position="18"/>
    </location>
</feature>
<feature type="strand" evidence="14">
    <location>
        <begin position="20"/>
        <end position="22"/>
    </location>
</feature>
<feature type="strand" evidence="14">
    <location>
        <begin position="24"/>
        <end position="28"/>
    </location>
</feature>
<feature type="helix" evidence="14">
    <location>
        <begin position="34"/>
        <end position="36"/>
    </location>
</feature>
<feature type="helix" evidence="14">
    <location>
        <begin position="40"/>
        <end position="46"/>
    </location>
</feature>
<feature type="turn" evidence="14">
    <location>
        <begin position="58"/>
        <end position="60"/>
    </location>
</feature>
<feature type="strand" evidence="14">
    <location>
        <begin position="66"/>
        <end position="68"/>
    </location>
</feature>
<feature type="helix" evidence="14">
    <location>
        <begin position="75"/>
        <end position="84"/>
    </location>
</feature>
<feature type="strand" evidence="14">
    <location>
        <begin position="92"/>
        <end position="96"/>
    </location>
</feature>
<feature type="strand" evidence="14">
    <location>
        <begin position="98"/>
        <end position="103"/>
    </location>
</feature>
<feature type="helix" evidence="14">
    <location>
        <begin position="104"/>
        <end position="113"/>
    </location>
</feature>
<feature type="strand" evidence="14">
    <location>
        <begin position="117"/>
        <end position="123"/>
    </location>
</feature>
<feature type="helix" evidence="14">
    <location>
        <begin position="125"/>
        <end position="130"/>
    </location>
</feature>
<feature type="helix" evidence="14">
    <location>
        <begin position="158"/>
        <end position="161"/>
    </location>
</feature>
<feature type="helix" evidence="14">
    <location>
        <begin position="165"/>
        <end position="173"/>
    </location>
</feature>
<feature type="helix" evidence="14">
    <location>
        <begin position="177"/>
        <end position="180"/>
    </location>
</feature>
<feature type="strand" evidence="14">
    <location>
        <begin position="182"/>
        <end position="185"/>
    </location>
</feature>
<feature type="helix" evidence="14">
    <location>
        <begin position="189"/>
        <end position="192"/>
    </location>
</feature>
<feature type="strand" evidence="14">
    <location>
        <begin position="199"/>
        <end position="202"/>
    </location>
</feature>
<feature type="strand" evidence="14">
    <location>
        <begin position="211"/>
        <end position="213"/>
    </location>
</feature>
<feature type="helix" evidence="14">
    <location>
        <begin position="216"/>
        <end position="219"/>
    </location>
</feature>
<feature type="turn" evidence="14">
    <location>
        <begin position="222"/>
        <end position="224"/>
    </location>
</feature>
<feature type="helix" evidence="14">
    <location>
        <begin position="232"/>
        <end position="244"/>
    </location>
</feature>
<feature type="strand" evidence="14">
    <location>
        <begin position="255"/>
        <end position="258"/>
    </location>
</feature>
<feature type="strand" evidence="14">
    <location>
        <begin position="260"/>
        <end position="262"/>
    </location>
</feature>
<feature type="helix" evidence="14">
    <location>
        <begin position="263"/>
        <end position="274"/>
    </location>
</feature>
<feature type="strand" evidence="14">
    <location>
        <begin position="279"/>
        <end position="285"/>
    </location>
</feature>
<feature type="helix" evidence="14">
    <location>
        <begin position="286"/>
        <end position="294"/>
    </location>
</feature>
<feature type="helix" evidence="14">
    <location>
        <begin position="296"/>
        <end position="298"/>
    </location>
</feature>
<protein>
    <recommendedName>
        <fullName evidence="10">Thiosulfate sulfurtransferase TUM1</fullName>
        <ecNumber evidence="7">2.8.1.1</ecNumber>
    </recommendedName>
    <alternativeName>
        <fullName evidence="10">Thiouridine modification protein 1</fullName>
    </alternativeName>
    <alternativeName>
        <fullName evidence="10">tRNA-thiouridine modification protein 1</fullName>
    </alternativeName>
</protein>
<reference key="1">
    <citation type="journal article" date="1997" name="Yeast">
        <title>Sequencing analysis of a 36.8 kb fragment of yeast chromosome XV reveals 26 open reading frames including SEC63, CDC31, SUG2, GCD1, RBL2, PNT1, PAC1 and VPH1.</title>
        <authorList>
            <person name="Poirey R."/>
            <person name="Jauniaux J.-C."/>
        </authorList>
    </citation>
    <scope>NUCLEOTIDE SEQUENCE [GENOMIC DNA]</scope>
    <source>
        <strain>ATCC 96604 / S288c / FY1679</strain>
    </source>
</reference>
<reference key="2">
    <citation type="journal article" date="1997" name="Nature">
        <title>The nucleotide sequence of Saccharomyces cerevisiae chromosome XV.</title>
        <authorList>
            <person name="Dujon B."/>
            <person name="Albermann K."/>
            <person name="Aldea M."/>
            <person name="Alexandraki D."/>
            <person name="Ansorge W."/>
            <person name="Arino J."/>
            <person name="Benes V."/>
            <person name="Bohn C."/>
            <person name="Bolotin-Fukuhara M."/>
            <person name="Bordonne R."/>
            <person name="Boyer J."/>
            <person name="Camasses A."/>
            <person name="Casamayor A."/>
            <person name="Casas C."/>
            <person name="Cheret G."/>
            <person name="Cziepluch C."/>
            <person name="Daignan-Fornier B."/>
            <person name="Dang V.-D."/>
            <person name="de Haan M."/>
            <person name="Delius H."/>
            <person name="Durand P."/>
            <person name="Fairhead C."/>
            <person name="Feldmann H."/>
            <person name="Gaillon L."/>
            <person name="Galisson F."/>
            <person name="Gamo F.-J."/>
            <person name="Gancedo C."/>
            <person name="Goffeau A."/>
            <person name="Goulding S.E."/>
            <person name="Grivell L.A."/>
            <person name="Habbig B."/>
            <person name="Hand N.J."/>
            <person name="Hani J."/>
            <person name="Hattenhorst U."/>
            <person name="Hebling U."/>
            <person name="Hernando Y."/>
            <person name="Herrero E."/>
            <person name="Heumann K."/>
            <person name="Hiesel R."/>
            <person name="Hilger F."/>
            <person name="Hofmann B."/>
            <person name="Hollenberg C.P."/>
            <person name="Hughes B."/>
            <person name="Jauniaux J.-C."/>
            <person name="Kalogeropoulos A."/>
            <person name="Katsoulou C."/>
            <person name="Kordes E."/>
            <person name="Lafuente M.J."/>
            <person name="Landt O."/>
            <person name="Louis E.J."/>
            <person name="Maarse A.C."/>
            <person name="Madania A."/>
            <person name="Mannhaupt G."/>
            <person name="Marck C."/>
            <person name="Martin R.P."/>
            <person name="Mewes H.-W."/>
            <person name="Michaux G."/>
            <person name="Paces V."/>
            <person name="Parle-McDermott A.G."/>
            <person name="Pearson B.M."/>
            <person name="Perrin A."/>
            <person name="Pettersson B."/>
            <person name="Poch O."/>
            <person name="Pohl T.M."/>
            <person name="Poirey R."/>
            <person name="Portetelle D."/>
            <person name="Pujol A."/>
            <person name="Purnelle B."/>
            <person name="Ramezani Rad M."/>
            <person name="Rechmann S."/>
            <person name="Schwager C."/>
            <person name="Schweizer M."/>
            <person name="Sor F."/>
            <person name="Sterky F."/>
            <person name="Tarassov I.A."/>
            <person name="Teodoru C."/>
            <person name="Tettelin H."/>
            <person name="Thierry A."/>
            <person name="Tobiasch E."/>
            <person name="Tzermia M."/>
            <person name="Uhlen M."/>
            <person name="Unseld M."/>
            <person name="Valens M."/>
            <person name="Vandenbol M."/>
            <person name="Vetter I."/>
            <person name="Vlcek C."/>
            <person name="Voet M."/>
            <person name="Volckaert G."/>
            <person name="Voss H."/>
            <person name="Wambutt R."/>
            <person name="Wedler H."/>
            <person name="Wiemann S."/>
            <person name="Winsor B."/>
            <person name="Wolfe K.H."/>
            <person name="Zollner A."/>
            <person name="Zumstein E."/>
            <person name="Kleine K."/>
        </authorList>
    </citation>
    <scope>NUCLEOTIDE SEQUENCE [LARGE SCALE GENOMIC DNA]</scope>
    <source>
        <strain>ATCC 204508 / S288c</strain>
    </source>
</reference>
<reference key="3">
    <citation type="journal article" date="2014" name="G3 (Bethesda)">
        <title>The reference genome sequence of Saccharomyces cerevisiae: Then and now.</title>
        <authorList>
            <person name="Engel S.R."/>
            <person name="Dietrich F.S."/>
            <person name="Fisk D.G."/>
            <person name="Binkley G."/>
            <person name="Balakrishnan R."/>
            <person name="Costanzo M.C."/>
            <person name="Dwight S.S."/>
            <person name="Hitz B.C."/>
            <person name="Karra K."/>
            <person name="Nash R.S."/>
            <person name="Weng S."/>
            <person name="Wong E.D."/>
            <person name="Lloyd P."/>
            <person name="Skrzypek M.S."/>
            <person name="Miyasato S.R."/>
            <person name="Simison M."/>
            <person name="Cherry J.M."/>
        </authorList>
    </citation>
    <scope>GENOME REANNOTATION</scope>
    <source>
        <strain>ATCC 204508 / S288c</strain>
    </source>
</reference>
<reference key="4">
    <citation type="journal article" date="2007" name="Genome Res.">
        <title>Approaching a complete repository of sequence-verified protein-encoding clones for Saccharomyces cerevisiae.</title>
        <authorList>
            <person name="Hu Y."/>
            <person name="Rolfs A."/>
            <person name="Bhullar B."/>
            <person name="Murthy T.V.S."/>
            <person name="Zhu C."/>
            <person name="Berger M.F."/>
            <person name="Camargo A.A."/>
            <person name="Kelley F."/>
            <person name="McCarron S."/>
            <person name="Jepson D."/>
            <person name="Richardson A."/>
            <person name="Raphael J."/>
            <person name="Moreira D."/>
            <person name="Taycher E."/>
            <person name="Zuo D."/>
            <person name="Mohr S."/>
            <person name="Kane M.F."/>
            <person name="Williamson J."/>
            <person name="Simpson A.J.G."/>
            <person name="Bulyk M.L."/>
            <person name="Harlow E."/>
            <person name="Marsischky G."/>
            <person name="Kolodner R.D."/>
            <person name="LaBaer J."/>
        </authorList>
    </citation>
    <scope>NUCLEOTIDE SEQUENCE [GENOMIC DNA]</scope>
    <source>
        <strain>ATCC 204508 / S288c</strain>
    </source>
</reference>
<reference key="5">
    <citation type="journal article" date="2003" name="Nature">
        <title>Global analysis of protein localization in budding yeast.</title>
        <authorList>
            <person name="Huh W.-K."/>
            <person name="Falvo J.V."/>
            <person name="Gerke L.C."/>
            <person name="Carroll A.S."/>
            <person name="Howson R.W."/>
            <person name="Weissman J.S."/>
            <person name="O'Shea E.K."/>
        </authorList>
    </citation>
    <scope>SUBCELLULAR LOCATION [LARGE SCALE ANALYSIS]</scope>
</reference>
<reference key="6">
    <citation type="journal article" date="2003" name="Nature">
        <title>Global analysis of protein expression in yeast.</title>
        <authorList>
            <person name="Ghaemmaghami S."/>
            <person name="Huh W.-K."/>
            <person name="Bower K."/>
            <person name="Howson R.W."/>
            <person name="Belle A."/>
            <person name="Dephoure N."/>
            <person name="O'Shea E.K."/>
            <person name="Weissman J.S."/>
        </authorList>
    </citation>
    <scope>LEVEL OF PROTEIN EXPRESSION [LARGE SCALE ANALYSIS]</scope>
</reference>
<reference key="7">
    <citation type="journal article" date="2008" name="Mol. Cell. Proteomics">
        <title>A multidimensional chromatography technology for in-depth phosphoproteome analysis.</title>
        <authorList>
            <person name="Albuquerque C.P."/>
            <person name="Smolka M.B."/>
            <person name="Payne S.H."/>
            <person name="Bafna V."/>
            <person name="Eng J."/>
            <person name="Zhou H."/>
        </authorList>
    </citation>
    <scope>PHOSPHORYLATION [LARGE SCALE ANALYSIS] AT SER-264</scope>
    <scope>IDENTIFICATION BY MASS SPECTROMETRY [LARGE SCALE ANALYSIS]</scope>
</reference>
<reference key="8">
    <citation type="journal article" date="2008" name="RNA">
        <title>A genome-wide screen identifies genes required for formation of the wobble nucleoside 5-methoxycarbonylmethyl-2-thiouridine in Saccharomyces cerevisiae.</title>
        <authorList>
            <person name="Huang B."/>
            <person name="Lu J."/>
            <person name="Bystroem A.S."/>
        </authorList>
    </citation>
    <scope>FUNCTION</scope>
</reference>
<reference key="9">
    <citation type="journal article" date="2009" name="Nucleic Acids Res.">
        <title>Mechanistic characterization of the sulfur-relay system for eukaryotic 2-thiouridine biogenesis at tRNA wobble positions.</title>
        <authorList>
            <person name="Noma A."/>
            <person name="Sakaguchi Y."/>
            <person name="Suzuki T."/>
        </authorList>
    </citation>
    <scope>FUNCTION</scope>
    <scope>DISRUPTION PHENOTYPE</scope>
    <scope>CATALYTIC ACTIVITY</scope>
</reference>
<reference key="10">
    <citation type="journal article" date="2009" name="Science">
        <title>Global analysis of Cdk1 substrate phosphorylation sites provides insights into evolution.</title>
        <authorList>
            <person name="Holt L.J."/>
            <person name="Tuch B.B."/>
            <person name="Villen J."/>
            <person name="Johnson A.D."/>
            <person name="Gygi S.P."/>
            <person name="Morgan D.O."/>
        </authorList>
    </citation>
    <scope>PHOSPHORYLATION [LARGE SCALE ANALYSIS] AT SER-201</scope>
    <scope>IDENTIFICATION BY MASS SPECTROMETRY [LARGE SCALE ANALYSIS]</scope>
</reference>
<reference key="11">
    <citation type="journal article" date="2017" name="BMC Microbiol.">
        <title>Tum1 is involved in the metabolism of sterol esters in Saccharomyces cerevisiae.</title>
        <authorList>
            <person name="Ursic K."/>
            <person name="Ogrizovic M."/>
            <person name="Kordis D."/>
            <person name="Natter K."/>
            <person name="Petrovic U."/>
        </authorList>
    </citation>
    <scope>FUNCTION</scope>
    <scope>DISRUPTION PHENOTYPE</scope>
</reference>
<reference evidence="11" key="12">
    <citation type="journal article" date="2012" name="Protein Pept. Lett.">
        <title>Crystal structure of the Tum1 protein from the yeast Saccharomyces cerevisiae.</title>
        <authorList>
            <person name="Qiu R."/>
            <person name="Wang F."/>
            <person name="Liu M."/>
            <person name="Lou T."/>
            <person name="Ji C."/>
        </authorList>
    </citation>
    <scope>X-RAY CRYSTALLOGRAPHY (1.90 ANGSTROMS)</scope>
    <scope>ACTIVE SITE</scope>
</reference>
<gene>
    <name evidence="10" type="primary">TUM1</name>
    <name type="ordered locus">YOR251C</name>
</gene>
<proteinExistence type="evidence at protein level"/>
<evidence type="ECO:0000250" key="1"/>
<evidence type="ECO:0000255" key="2">
    <source>
        <dbReference type="PROSITE-ProRule" id="PRU00173"/>
    </source>
</evidence>
<evidence type="ECO:0000256" key="3">
    <source>
        <dbReference type="SAM" id="MobiDB-lite"/>
    </source>
</evidence>
<evidence type="ECO:0000269" key="4">
    <source>
    </source>
</evidence>
<evidence type="ECO:0000269" key="5">
    <source>
    </source>
</evidence>
<evidence type="ECO:0000269" key="6">
    <source>
    </source>
</evidence>
<evidence type="ECO:0000269" key="7">
    <source>
    </source>
</evidence>
<evidence type="ECO:0000269" key="8">
    <source>
    </source>
</evidence>
<evidence type="ECO:0000269" key="9">
    <source>
    </source>
</evidence>
<evidence type="ECO:0000303" key="10">
    <source>
    </source>
</evidence>
<evidence type="ECO:0007744" key="11">
    <source>
        <dbReference type="PDB" id="3UTN"/>
    </source>
</evidence>
<evidence type="ECO:0007744" key="12">
    <source>
    </source>
</evidence>
<evidence type="ECO:0007744" key="13">
    <source>
    </source>
</evidence>
<evidence type="ECO:0007829" key="14">
    <source>
        <dbReference type="PDB" id="3UTN"/>
    </source>
</evidence>